<keyword id="KW-0963">Cytoplasm</keyword>
<keyword id="KW-0227">DNA damage</keyword>
<keyword id="KW-0233">DNA recombination</keyword>
<keyword id="KW-0234">DNA repair</keyword>
<keyword id="KW-0238">DNA-binding</keyword>
<keyword id="KW-1185">Reference proteome</keyword>
<sequence>MIVGLVGEVLKKEPTYLHIEVGGVVYEVFISLNASAAIDKKQIRLHTTHIIREDSESLYGFVDINEKKMFDRLIKLNGVGPKVAIAICSTFKPQEFVQIVQQKNVAMLKKVPGIGPKSAQRILVELGEFDISESNVTSSAFQEASMALQSLGFKKEQIQKALQECTATDTASLVKEALKKIQKL</sequence>
<comment type="function">
    <text evidence="1">The RuvA-RuvB-RuvC complex processes Holliday junction (HJ) DNA during genetic recombination and DNA repair, while the RuvA-RuvB complex plays an important role in the rescue of blocked DNA replication forks via replication fork reversal (RFR). RuvA specifically binds to HJ cruciform DNA, conferring on it an open structure. The RuvB hexamer acts as an ATP-dependent pump, pulling dsDNA into and through the RuvAB complex. HJ branch migration allows RuvC to scan DNA until it finds its consensus sequence, where it cleaves and resolves the cruciform DNA.</text>
</comment>
<comment type="subunit">
    <text evidence="1">Homotetramer. Forms an RuvA(8)-RuvB(12)-Holliday junction (HJ) complex. HJ DNA is sandwiched between 2 RuvA tetramers; dsDNA enters through RuvA and exits via RuvB. An RuvB hexamer assembles on each DNA strand where it exits the tetramer. Each RuvB hexamer is contacted by two RuvA subunits (via domain III) on 2 adjacent RuvB subunits; this complex drives branch migration. In the full resolvosome a probable DNA-RuvA(4)-RuvB(12)-RuvC(2) complex forms which resolves the HJ.</text>
</comment>
<comment type="subcellular location">
    <subcellularLocation>
        <location evidence="1">Cytoplasm</location>
    </subcellularLocation>
</comment>
<comment type="domain">
    <text evidence="1">Has three domains with a flexible linker between the domains II and III and assumes an 'L' shape. Domain III is highly mobile and contacts RuvB.</text>
</comment>
<comment type="similarity">
    <text evidence="1">Belongs to the RuvA family.</text>
</comment>
<protein>
    <recommendedName>
        <fullName evidence="1">Holliday junction branch migration complex subunit RuvA</fullName>
    </recommendedName>
</protein>
<evidence type="ECO:0000255" key="1">
    <source>
        <dbReference type="HAMAP-Rule" id="MF_00031"/>
    </source>
</evidence>
<gene>
    <name evidence="1" type="primary">ruvA</name>
    <name type="ordered locus">NIS_1098</name>
</gene>
<dbReference type="EMBL" id="AP009178">
    <property type="protein sequence ID" value="BAF70207.1"/>
    <property type="molecule type" value="Genomic_DNA"/>
</dbReference>
<dbReference type="RefSeq" id="WP_012082470.1">
    <property type="nucleotide sequence ID" value="NC_009662.1"/>
</dbReference>
<dbReference type="SMR" id="A6Q3Z8"/>
<dbReference type="FunCoup" id="A6Q3Z8">
    <property type="interactions" value="207"/>
</dbReference>
<dbReference type="STRING" id="387092.NIS_1098"/>
<dbReference type="KEGG" id="nis:NIS_1098"/>
<dbReference type="eggNOG" id="COG0632">
    <property type="taxonomic scope" value="Bacteria"/>
</dbReference>
<dbReference type="HOGENOM" id="CLU_087936_3_1_7"/>
<dbReference type="InParanoid" id="A6Q3Z8"/>
<dbReference type="OrthoDB" id="5293449at2"/>
<dbReference type="Proteomes" id="UP000001118">
    <property type="component" value="Chromosome"/>
</dbReference>
<dbReference type="GO" id="GO:0005737">
    <property type="term" value="C:cytoplasm"/>
    <property type="evidence" value="ECO:0007669"/>
    <property type="project" value="UniProtKB-SubCell"/>
</dbReference>
<dbReference type="GO" id="GO:0009379">
    <property type="term" value="C:Holliday junction helicase complex"/>
    <property type="evidence" value="ECO:0007669"/>
    <property type="project" value="InterPro"/>
</dbReference>
<dbReference type="GO" id="GO:0048476">
    <property type="term" value="C:Holliday junction resolvase complex"/>
    <property type="evidence" value="ECO:0007669"/>
    <property type="project" value="UniProtKB-UniRule"/>
</dbReference>
<dbReference type="GO" id="GO:0005524">
    <property type="term" value="F:ATP binding"/>
    <property type="evidence" value="ECO:0007669"/>
    <property type="project" value="InterPro"/>
</dbReference>
<dbReference type="GO" id="GO:0000400">
    <property type="term" value="F:four-way junction DNA binding"/>
    <property type="evidence" value="ECO:0007669"/>
    <property type="project" value="UniProtKB-UniRule"/>
</dbReference>
<dbReference type="GO" id="GO:0009378">
    <property type="term" value="F:four-way junction helicase activity"/>
    <property type="evidence" value="ECO:0007669"/>
    <property type="project" value="InterPro"/>
</dbReference>
<dbReference type="GO" id="GO:0006310">
    <property type="term" value="P:DNA recombination"/>
    <property type="evidence" value="ECO:0007669"/>
    <property type="project" value="UniProtKB-UniRule"/>
</dbReference>
<dbReference type="GO" id="GO:0006281">
    <property type="term" value="P:DNA repair"/>
    <property type="evidence" value="ECO:0007669"/>
    <property type="project" value="UniProtKB-UniRule"/>
</dbReference>
<dbReference type="CDD" id="cd14332">
    <property type="entry name" value="UBA_RuvA_C"/>
    <property type="match status" value="1"/>
</dbReference>
<dbReference type="Gene3D" id="1.10.150.20">
    <property type="entry name" value="5' to 3' exonuclease, C-terminal subdomain"/>
    <property type="match status" value="1"/>
</dbReference>
<dbReference type="Gene3D" id="1.10.8.10">
    <property type="entry name" value="DNA helicase RuvA subunit, C-terminal domain"/>
    <property type="match status" value="1"/>
</dbReference>
<dbReference type="Gene3D" id="2.40.50.140">
    <property type="entry name" value="Nucleic acid-binding proteins"/>
    <property type="match status" value="1"/>
</dbReference>
<dbReference type="HAMAP" id="MF_00031">
    <property type="entry name" value="DNA_HJ_migration_RuvA"/>
    <property type="match status" value="1"/>
</dbReference>
<dbReference type="InterPro" id="IPR013849">
    <property type="entry name" value="DNA_helicase_Holl-junc_RuvA_I"/>
</dbReference>
<dbReference type="InterPro" id="IPR003583">
    <property type="entry name" value="Hlx-hairpin-Hlx_DNA-bd_motif"/>
</dbReference>
<dbReference type="InterPro" id="IPR012340">
    <property type="entry name" value="NA-bd_OB-fold"/>
</dbReference>
<dbReference type="InterPro" id="IPR000085">
    <property type="entry name" value="RuvA"/>
</dbReference>
<dbReference type="InterPro" id="IPR010994">
    <property type="entry name" value="RuvA_2-like"/>
</dbReference>
<dbReference type="InterPro" id="IPR011114">
    <property type="entry name" value="RuvA_C"/>
</dbReference>
<dbReference type="InterPro" id="IPR036267">
    <property type="entry name" value="RuvA_C_sf"/>
</dbReference>
<dbReference type="NCBIfam" id="TIGR00084">
    <property type="entry name" value="ruvA"/>
    <property type="match status" value="1"/>
</dbReference>
<dbReference type="Pfam" id="PF14520">
    <property type="entry name" value="HHH_5"/>
    <property type="match status" value="1"/>
</dbReference>
<dbReference type="Pfam" id="PF07499">
    <property type="entry name" value="RuvA_C"/>
    <property type="match status" value="1"/>
</dbReference>
<dbReference type="Pfam" id="PF01330">
    <property type="entry name" value="RuvA_N"/>
    <property type="match status" value="1"/>
</dbReference>
<dbReference type="SMART" id="SM00278">
    <property type="entry name" value="HhH1"/>
    <property type="match status" value="2"/>
</dbReference>
<dbReference type="SUPFAM" id="SSF46929">
    <property type="entry name" value="DNA helicase RuvA subunit, C-terminal domain"/>
    <property type="match status" value="1"/>
</dbReference>
<dbReference type="SUPFAM" id="SSF50249">
    <property type="entry name" value="Nucleic acid-binding proteins"/>
    <property type="match status" value="1"/>
</dbReference>
<dbReference type="SUPFAM" id="SSF47781">
    <property type="entry name" value="RuvA domain 2-like"/>
    <property type="match status" value="1"/>
</dbReference>
<accession>A6Q3Z8</accession>
<proteinExistence type="inferred from homology"/>
<feature type="chain" id="PRO_1000002500" description="Holliday junction branch migration complex subunit RuvA">
    <location>
        <begin position="1"/>
        <end position="184"/>
    </location>
</feature>
<feature type="region of interest" description="Domain I" evidence="1">
    <location>
        <begin position="1"/>
        <end position="62"/>
    </location>
</feature>
<feature type="region of interest" description="Domain II" evidence="1">
    <location>
        <begin position="63"/>
        <end position="134"/>
    </location>
</feature>
<feature type="region of interest" description="Flexible linker" evidence="1">
    <location>
        <begin position="134"/>
        <end position="135"/>
    </location>
</feature>
<feature type="region of interest" description="Domain III" evidence="1">
    <location>
        <begin position="136"/>
        <end position="184"/>
    </location>
</feature>
<name>RUVA_NITSB</name>
<organism>
    <name type="scientific">Nitratiruptor sp. (strain SB155-2)</name>
    <dbReference type="NCBI Taxonomy" id="387092"/>
    <lineage>
        <taxon>Bacteria</taxon>
        <taxon>Pseudomonadati</taxon>
        <taxon>Campylobacterota</taxon>
        <taxon>Epsilonproteobacteria</taxon>
        <taxon>Nautiliales</taxon>
        <taxon>Nitratiruptoraceae</taxon>
        <taxon>Nitratiruptor</taxon>
    </lineage>
</organism>
<reference key="1">
    <citation type="journal article" date="2007" name="Proc. Natl. Acad. Sci. U.S.A.">
        <title>Deep-sea vent epsilon-proteobacterial genomes provide insights into emergence of pathogens.</title>
        <authorList>
            <person name="Nakagawa S."/>
            <person name="Takaki Y."/>
            <person name="Shimamura S."/>
            <person name="Reysenbach A.-L."/>
            <person name="Takai K."/>
            <person name="Horikoshi K."/>
        </authorList>
    </citation>
    <scope>NUCLEOTIDE SEQUENCE [LARGE SCALE GENOMIC DNA]</scope>
    <source>
        <strain>SB155-2</strain>
    </source>
</reference>